<feature type="chain" id="PRO_0000343103" description="Exportin-T">
    <location>
        <begin position="1"/>
        <end position="992"/>
    </location>
</feature>
<proteinExistence type="inferred from homology"/>
<name>XPOT_PICST</name>
<gene>
    <name type="primary">LOS1</name>
    <name type="ORF">PICST_89506</name>
</gene>
<comment type="function">
    <text evidence="1">tRNA nucleus export receptor which facilitates tRNA translocation across the nuclear pore complex. Involved in pre-tRNA splicing, probably by affecting the interaction of pre-tRNA with splicing endonuclease (By similarity).</text>
</comment>
<comment type="subcellular location">
    <subcellularLocation>
        <location evidence="1">Nucleus</location>
    </subcellularLocation>
    <subcellularLocation>
        <location evidence="1">Cytoplasm</location>
    </subcellularLocation>
    <text evidence="1">Shuttles between the nucleus and the cytoplasm.</text>
</comment>
<comment type="similarity">
    <text evidence="2">Belongs to the exportin family.</text>
</comment>
<sequence length="992" mass="113774">MEQQIHQAVEIAMSGTADPNLKNQAFAFINQIKSTEDGYKSCVDILVKSGAQPVNEGLKFFIFQVVDENIEKLSSEQLYSLNDQLFKTLSSYISNDVSDPIYLRNKFSQLFAKIFCYVYLNIYPNFFKSLFELISSNKQIALDYYTRIVIAIHYEIGDKFIARSRELQDRNNLLKDAIRLNDMNALVSSWGKILQVPSNSSEVLNNQLKIVGQYINWMEIGLFISNDYMRSIFQYLNKEHQRNETCMTLIEIISKKMKPSNKLELVGILDITNIINSIDLSENDDLEFVENIAKLINQVGQELLIVLENEPTLFSSINAQLAKLWPLIFSSLGHEYDDVSQHVFPFIQQYLLLCKKSPELGSLDLLSTLLNKIIIKMKFDDDANGVDDDDETEQFSEIRSKLKNFQDTIAVLKPDLYVEAITIVINESLFGGDKNWRKIELGLFELNNFSESLRNNLINLPKSEITNSKPFQIFQEFLVKLINSDLIINVNHPKIQIGFFDIVVKHYNFLNAQSSQQSLILRILEIFTSPLGLFNENEKVRLRSWYSFFRFVKLTKPSLNNTAFVENVVIKLQPLLVIKAELPTTDEDDDVVENGNFSSQLYLYESIGLLISLLSTDLMNHKIKFIDLVFQPLFNDLENCVSSSEQVKLNQPLISMQAHHCLMALGTFARGYDHDFQNKYSEEIRGKINNAAQVVLITLENFPKNELIRDAARFSFARFIPILKNQINIHLAKFVTLVLAANNLKISELTDFLSFLGQIVHNYKDDDNIYQLLNNLLTPLIKKIFELSSNSGEDALIPDIIRDKYQLKKAYMTFLSAIFLNHSASLFVTETNKQEFAEVVTSLLEYAYDLSETSVSKLAITQLINVVNFFGNGGKIHDPEDKYANNLPPVEGIDAFLMSRVTQLSFELPFQKQEFDLKDAQYRLIGQEISLLLKSYQQRGGDEFLSYLSNYLTNMGLSQSLMNDFGSNLVKLDARNFKKYFITFVTQLKGNK</sequence>
<reference key="1">
    <citation type="journal article" date="2007" name="Nat. Biotechnol.">
        <title>Genome sequence of the lignocellulose-bioconverting and xylose-fermenting yeast Pichia stipitis.</title>
        <authorList>
            <person name="Jeffries T.W."/>
            <person name="Grigoriev I.V."/>
            <person name="Grimwood J."/>
            <person name="Laplaza J.M."/>
            <person name="Aerts A."/>
            <person name="Salamov A."/>
            <person name="Schmutz J."/>
            <person name="Lindquist E."/>
            <person name="Dehal P."/>
            <person name="Shapiro H."/>
            <person name="Jin Y.-S."/>
            <person name="Passoth V."/>
            <person name="Richardson P.M."/>
        </authorList>
    </citation>
    <scope>NUCLEOTIDE SEQUENCE [LARGE SCALE GENOMIC DNA]</scope>
    <source>
        <strain>ATCC 58785 / CBS 6054 / NBRC 10063 / NRRL Y-11545</strain>
    </source>
</reference>
<keyword id="KW-0963">Cytoplasm</keyword>
<keyword id="KW-0539">Nucleus</keyword>
<keyword id="KW-1185">Reference proteome</keyword>
<keyword id="KW-0694">RNA-binding</keyword>
<keyword id="KW-0813">Transport</keyword>
<keyword id="KW-0819">tRNA processing</keyword>
<keyword id="KW-0820">tRNA-binding</keyword>
<evidence type="ECO:0000250" key="1"/>
<evidence type="ECO:0000305" key="2"/>
<organism>
    <name type="scientific">Scheffersomyces stipitis (strain ATCC 58785 / CBS 6054 / NBRC 10063 / NRRL Y-11545)</name>
    <name type="common">Yeast</name>
    <name type="synonym">Pichia stipitis</name>
    <dbReference type="NCBI Taxonomy" id="322104"/>
    <lineage>
        <taxon>Eukaryota</taxon>
        <taxon>Fungi</taxon>
        <taxon>Dikarya</taxon>
        <taxon>Ascomycota</taxon>
        <taxon>Saccharomycotina</taxon>
        <taxon>Pichiomycetes</taxon>
        <taxon>Debaryomycetaceae</taxon>
        <taxon>Scheffersomyces</taxon>
    </lineage>
</organism>
<dbReference type="EMBL" id="CP000499">
    <property type="protein sequence ID" value="ABN67295.2"/>
    <property type="molecule type" value="Genomic_DNA"/>
</dbReference>
<dbReference type="RefSeq" id="XP_001385324.2">
    <property type="nucleotide sequence ID" value="XM_001385287.1"/>
</dbReference>
<dbReference type="SMR" id="A3LWK3"/>
<dbReference type="FunCoup" id="A3LWK3">
    <property type="interactions" value="1083"/>
</dbReference>
<dbReference type="STRING" id="322104.A3LWK3"/>
<dbReference type="GeneID" id="4839207"/>
<dbReference type="KEGG" id="pic:PICST_89506"/>
<dbReference type="eggNOG" id="KOG2021">
    <property type="taxonomic scope" value="Eukaryota"/>
</dbReference>
<dbReference type="HOGENOM" id="CLU_004414_0_1_1"/>
<dbReference type="InParanoid" id="A3LWK3"/>
<dbReference type="OMA" id="HEMFLFG"/>
<dbReference type="OrthoDB" id="26399at2759"/>
<dbReference type="Proteomes" id="UP000002258">
    <property type="component" value="Chromosome 5"/>
</dbReference>
<dbReference type="GO" id="GO:0005737">
    <property type="term" value="C:cytoplasm"/>
    <property type="evidence" value="ECO:0007669"/>
    <property type="project" value="UniProtKB-SubCell"/>
</dbReference>
<dbReference type="GO" id="GO:0016363">
    <property type="term" value="C:nuclear matrix"/>
    <property type="evidence" value="ECO:0007669"/>
    <property type="project" value="EnsemblFungi"/>
</dbReference>
<dbReference type="GO" id="GO:0005643">
    <property type="term" value="C:nuclear pore"/>
    <property type="evidence" value="ECO:0007669"/>
    <property type="project" value="TreeGrafter"/>
</dbReference>
<dbReference type="GO" id="GO:0031267">
    <property type="term" value="F:small GTPase binding"/>
    <property type="evidence" value="ECO:0007669"/>
    <property type="project" value="EnsemblFungi"/>
</dbReference>
<dbReference type="GO" id="GO:0000049">
    <property type="term" value="F:tRNA binding"/>
    <property type="evidence" value="ECO:0007669"/>
    <property type="project" value="UniProtKB-KW"/>
</dbReference>
<dbReference type="GO" id="GO:0008033">
    <property type="term" value="P:tRNA processing"/>
    <property type="evidence" value="ECO:0007669"/>
    <property type="project" value="UniProtKB-KW"/>
</dbReference>
<dbReference type="GO" id="GO:0071528">
    <property type="term" value="P:tRNA re-export from nucleus"/>
    <property type="evidence" value="ECO:0007669"/>
    <property type="project" value="EnsemblFungi"/>
</dbReference>
<dbReference type="Gene3D" id="1.25.10.10">
    <property type="entry name" value="Leucine-rich Repeat Variant"/>
    <property type="match status" value="1"/>
</dbReference>
<dbReference type="InterPro" id="IPR011989">
    <property type="entry name" value="ARM-like"/>
</dbReference>
<dbReference type="InterPro" id="IPR016024">
    <property type="entry name" value="ARM-type_fold"/>
</dbReference>
<dbReference type="InterPro" id="IPR013598">
    <property type="entry name" value="Exportin-1/Importin-b-like"/>
</dbReference>
<dbReference type="InterPro" id="IPR045546">
    <property type="entry name" value="Exportin-T_C"/>
</dbReference>
<dbReference type="InterPro" id="IPR040017">
    <property type="entry name" value="XPOT"/>
</dbReference>
<dbReference type="PANTHER" id="PTHR15952:SF11">
    <property type="entry name" value="EXPORTIN-T"/>
    <property type="match status" value="1"/>
</dbReference>
<dbReference type="PANTHER" id="PTHR15952">
    <property type="entry name" value="EXPORTIN-T/LOS1"/>
    <property type="match status" value="1"/>
</dbReference>
<dbReference type="Pfam" id="PF19282">
    <property type="entry name" value="Exportin-T"/>
    <property type="match status" value="1"/>
</dbReference>
<dbReference type="Pfam" id="PF08389">
    <property type="entry name" value="Xpo1"/>
    <property type="match status" value="1"/>
</dbReference>
<dbReference type="SUPFAM" id="SSF48371">
    <property type="entry name" value="ARM repeat"/>
    <property type="match status" value="1"/>
</dbReference>
<accession>A3LWK3</accession>
<protein>
    <recommendedName>
        <fullName>Exportin-T</fullName>
    </recommendedName>
    <alternativeName>
        <fullName>Exportin(tRNA)</fullName>
    </alternativeName>
    <alternativeName>
        <fullName>Karyopherin-beta</fullName>
    </alternativeName>
    <alternativeName>
        <fullName>tRNA exportin</fullName>
    </alternativeName>
</protein>